<organism>
    <name type="scientific">Echis carinatus sochureki</name>
    <name type="common">Saw-scaled viper</name>
    <dbReference type="NCBI Taxonomy" id="124223"/>
    <lineage>
        <taxon>Eukaryota</taxon>
        <taxon>Metazoa</taxon>
        <taxon>Chordata</taxon>
        <taxon>Craniata</taxon>
        <taxon>Vertebrata</taxon>
        <taxon>Euteleostomi</taxon>
        <taxon>Lepidosauria</taxon>
        <taxon>Squamata</taxon>
        <taxon>Bifurcata</taxon>
        <taxon>Unidentata</taxon>
        <taxon>Episquamata</taxon>
        <taxon>Toxicofera</taxon>
        <taxon>Serpentes</taxon>
        <taxon>Colubroidea</taxon>
        <taxon>Viperidae</taxon>
        <taxon>Viperinae</taxon>
        <taxon>Echis</taxon>
    </lineage>
</organism>
<protein>
    <recommendedName>
        <fullName>Snaclec echicetin subunit alpha</fullName>
    </recommendedName>
</protein>
<name>SLA_ECHCS</name>
<comment type="function">
    <text evidence="2 3 4">Echicetin itself inhibits aggregation of washed platelets induced by vWF, thrombin or alboaggregin-A (PubMed:11290595, PubMed:8481512). However, when complexed with the pentameric plasma immunoglobulin Mkappa (IgMkappa), echicetin binds specifically to GPIb and activates platelets. This is caused by P-selectin expression and activation of alpha-IIb/beta-3 as well as tyrosine phosphorylation of several signal transduction molecules, including p53/56(LYN), p64, p72(SYK), p70 to p90, and p120 (PubMed:11290595). In vivo, it induces thrombocytopenia when injected into mice (PubMed:8481512), probably accounting of activation of platelets rather than inhibition (PubMed:11290595).</text>
</comment>
<comment type="subunit">
    <text evidence="2 4">Heterodimer of subunits alpha and beta; disulfide-linked (PubMed:9163349). Forms an active complex with the pentameric immunoglobuline Mkappa (IgMkappa) (PubMed:11290595).</text>
</comment>
<comment type="subcellular location">
    <subcellularLocation>
        <location evidence="4">Secreted</location>
    </subcellularLocation>
</comment>
<comment type="tissue specificity">
    <text evidence="5">Expressed by the venom gland.</text>
</comment>
<comment type="similarity">
    <text evidence="5">Belongs to the snaclec family.</text>
</comment>
<comment type="caution">
    <text evidence="5">The name echicetin has been given to 2 different proteins, this one from E.carinatus sochureki and another one for which the subspecies has not been specified (E.carinatus). Most experiments have been done on E.carinatus sochureki.</text>
</comment>
<evidence type="ECO:0000255" key="1">
    <source>
        <dbReference type="PROSITE-ProRule" id="PRU00040"/>
    </source>
</evidence>
<evidence type="ECO:0000269" key="2">
    <source>
    </source>
</evidence>
<evidence type="ECO:0000269" key="3">
    <source>
    </source>
</evidence>
<evidence type="ECO:0000269" key="4">
    <source>
    </source>
</evidence>
<evidence type="ECO:0000305" key="5"/>
<proteinExistence type="evidence at protein level"/>
<dbReference type="SMR" id="P81017"/>
<dbReference type="GO" id="GO:0005576">
    <property type="term" value="C:extracellular region"/>
    <property type="evidence" value="ECO:0007669"/>
    <property type="project" value="UniProtKB-SubCell"/>
</dbReference>
<dbReference type="GO" id="GO:0090729">
    <property type="term" value="F:toxin activity"/>
    <property type="evidence" value="ECO:0007669"/>
    <property type="project" value="UniProtKB-KW"/>
</dbReference>
<dbReference type="FunFam" id="3.10.100.10:FF:000087">
    <property type="entry name" value="Snaclec rhodocetin subunit delta"/>
    <property type="match status" value="1"/>
</dbReference>
<dbReference type="Gene3D" id="3.10.100.10">
    <property type="entry name" value="Mannose-Binding Protein A, subunit A"/>
    <property type="match status" value="1"/>
</dbReference>
<dbReference type="InterPro" id="IPR001304">
    <property type="entry name" value="C-type_lectin-like"/>
</dbReference>
<dbReference type="InterPro" id="IPR016186">
    <property type="entry name" value="C-type_lectin-like/link_sf"/>
</dbReference>
<dbReference type="InterPro" id="IPR050111">
    <property type="entry name" value="C-type_lectin/snaclec_domain"/>
</dbReference>
<dbReference type="InterPro" id="IPR016187">
    <property type="entry name" value="CTDL_fold"/>
</dbReference>
<dbReference type="PANTHER" id="PTHR22803">
    <property type="entry name" value="MANNOSE, PHOSPHOLIPASE, LECTIN RECEPTOR RELATED"/>
    <property type="match status" value="1"/>
</dbReference>
<dbReference type="Pfam" id="PF00059">
    <property type="entry name" value="Lectin_C"/>
    <property type="match status" value="1"/>
</dbReference>
<dbReference type="PRINTS" id="PR01504">
    <property type="entry name" value="PNCREATITSAP"/>
</dbReference>
<dbReference type="SMART" id="SM00034">
    <property type="entry name" value="CLECT"/>
    <property type="match status" value="1"/>
</dbReference>
<dbReference type="SUPFAM" id="SSF56436">
    <property type="entry name" value="C-type lectin-like"/>
    <property type="match status" value="1"/>
</dbReference>
<dbReference type="PROSITE" id="PS50041">
    <property type="entry name" value="C_TYPE_LECTIN_2"/>
    <property type="match status" value="1"/>
</dbReference>
<keyword id="KW-0903">Direct protein sequencing</keyword>
<keyword id="KW-1015">Disulfide bond</keyword>
<keyword id="KW-1199">Hemostasis impairing toxin</keyword>
<keyword id="KW-1202">Platelet aggregation activating toxin</keyword>
<keyword id="KW-0964">Secreted</keyword>
<keyword id="KW-0800">Toxin</keyword>
<accession>P81017</accession>
<reference key="1">
    <citation type="journal article" date="1997" name="Biochem. J.">
        <title>Amino acid sequence of the alpha subunit and computer modelling of the alpha and beta subunits of echicetin from the venom of Echis carinatus (saw-scaled viper).</title>
        <authorList>
            <person name="Polgar J."/>
            <person name="Magnenat E.M."/>
            <person name="Peitsch M.C."/>
            <person name="Wells T.N.C."/>
            <person name="Saqi M.S.A."/>
            <person name="Clemetson K.J."/>
        </authorList>
    </citation>
    <scope>PROTEIN SEQUENCE</scope>
    <scope>FUNCTION</scope>
    <scope>SUBUNIT</scope>
    <scope>SUBCELLULAR LOCATION</scope>
    <source>
        <tissue>Venom</tissue>
    </source>
</reference>
<reference key="2">
    <citation type="journal article" date="1993" name="Blood">
        <title>Echicetin: a snake venom protein that inhibits binding of von Willebrand factor and alboaggregins to platelet glycoprotein Ib.</title>
        <authorList>
            <person name="Peng M."/>
            <person name="Lu W."/>
            <person name="Beviglia L."/>
            <person name="Niewiarowski S."/>
            <person name="Kirby E.P."/>
        </authorList>
    </citation>
    <scope>FUNCTION</scope>
    <source>
        <tissue>Venom</tissue>
    </source>
</reference>
<reference key="3">
    <citation type="journal article" date="2001" name="Blood">
        <title>Echicetin, a GPIb-binding snake C-type lectin from Echis carinatus, also contains a binding site for IgMkappa responsible for platelet agglutination in plasma and inducing signal transduction.</title>
        <authorList>
            <person name="Navdaev A."/>
            <person name="Dormann D."/>
            <person name="Clemetson J.M."/>
            <person name="Clemetson K.J."/>
        </authorList>
    </citation>
    <scope>FUNCTION</scope>
    <scope>SUBUNIT</scope>
    <source>
        <tissue>Venom</tissue>
    </source>
</reference>
<feature type="chain" id="PRO_0000046701" description="Snaclec echicetin subunit alpha">
    <location>
        <begin position="1"/>
        <end position="133"/>
    </location>
</feature>
<feature type="domain" description="C-type lectin" evidence="1">
    <location>
        <begin position="11"/>
        <end position="128"/>
    </location>
</feature>
<feature type="disulfide bond" evidence="1">
    <location>
        <begin position="4"/>
        <end position="15"/>
    </location>
</feature>
<feature type="disulfide bond" evidence="1">
    <location>
        <begin position="31"/>
        <end position="127"/>
    </location>
</feature>
<feature type="disulfide bond" description="Interchain (with C-75 in subunit beta)" evidence="1">
    <location>
        <position position="81"/>
    </location>
</feature>
<feature type="disulfide bond" evidence="1">
    <location>
        <begin position="102"/>
        <end position="119"/>
    </location>
</feature>
<sequence length="133" mass="15803">DQDCLSGWSFYEGHCYQLFRLKTWDEAEKYCNQWDGGHLVSIESNAKAEFVAQLISRKLPKSAIEDRVWIGLRDRSKREQCGHLWTDNSFVHYEHVVPPTKCFVLERQTEFRKWIAVNCEFKFPFVCKAKIPR</sequence>